<evidence type="ECO:0000255" key="1">
    <source>
        <dbReference type="HAMAP-Rule" id="MF_01224"/>
    </source>
</evidence>
<protein>
    <recommendedName>
        <fullName evidence="1">Cyclic pyranopterin monophosphate synthase</fullName>
        <ecNumber evidence="1">4.6.1.17</ecNumber>
    </recommendedName>
    <alternativeName>
        <fullName evidence="1">Molybdenum cofactor biosynthesis protein C</fullName>
    </alternativeName>
</protein>
<comment type="function">
    <text evidence="1">Catalyzes the conversion of (8S)-3',8-cyclo-7,8-dihydroguanosine 5'-triphosphate to cyclic pyranopterin monophosphate (cPMP).</text>
</comment>
<comment type="catalytic activity">
    <reaction evidence="1">
        <text>(8S)-3',8-cyclo-7,8-dihydroguanosine 5'-triphosphate = cyclic pyranopterin phosphate + diphosphate</text>
        <dbReference type="Rhea" id="RHEA:49580"/>
        <dbReference type="ChEBI" id="CHEBI:33019"/>
        <dbReference type="ChEBI" id="CHEBI:59648"/>
        <dbReference type="ChEBI" id="CHEBI:131766"/>
        <dbReference type="EC" id="4.6.1.17"/>
    </reaction>
</comment>
<comment type="pathway">
    <text evidence="1">Cofactor biosynthesis; molybdopterin biosynthesis.</text>
</comment>
<comment type="subunit">
    <text evidence="1">Homohexamer; trimer of dimers.</text>
</comment>
<comment type="similarity">
    <text evidence="1">Belongs to the MoaC family.</text>
</comment>
<name>MOAC_DESRM</name>
<gene>
    <name evidence="1" type="primary">moaC</name>
    <name type="ordered locus">Dred_2267</name>
</gene>
<proteinExistence type="inferred from homology"/>
<organism>
    <name type="scientific">Desulforamulus reducens (strain ATCC BAA-1160 / DSM 100696 / MI-1)</name>
    <name type="common">Desulfotomaculum reducens</name>
    <dbReference type="NCBI Taxonomy" id="349161"/>
    <lineage>
        <taxon>Bacteria</taxon>
        <taxon>Bacillati</taxon>
        <taxon>Bacillota</taxon>
        <taxon>Clostridia</taxon>
        <taxon>Eubacteriales</taxon>
        <taxon>Peptococcaceae</taxon>
        <taxon>Desulforamulus</taxon>
    </lineage>
</organism>
<accession>A4J6S4</accession>
<reference key="1">
    <citation type="submission" date="2007-03" db="EMBL/GenBank/DDBJ databases">
        <title>Complete sequence of Desulfotomaculum reducens MI-1.</title>
        <authorList>
            <consortium name="US DOE Joint Genome Institute"/>
            <person name="Copeland A."/>
            <person name="Lucas S."/>
            <person name="Lapidus A."/>
            <person name="Barry K."/>
            <person name="Detter J.C."/>
            <person name="Glavina del Rio T."/>
            <person name="Hammon N."/>
            <person name="Israni S."/>
            <person name="Dalin E."/>
            <person name="Tice H."/>
            <person name="Pitluck S."/>
            <person name="Sims D."/>
            <person name="Brettin T."/>
            <person name="Bruce D."/>
            <person name="Han C."/>
            <person name="Tapia R."/>
            <person name="Schmutz J."/>
            <person name="Larimer F."/>
            <person name="Land M."/>
            <person name="Hauser L."/>
            <person name="Kyrpides N."/>
            <person name="Kim E."/>
            <person name="Tebo B.M."/>
            <person name="Richardson P."/>
        </authorList>
    </citation>
    <scope>NUCLEOTIDE SEQUENCE [LARGE SCALE GENOMIC DNA]</scope>
    <source>
        <strain>ATCC BAA-1160 / DSM 100696 / MI-1</strain>
    </source>
</reference>
<keyword id="KW-0456">Lyase</keyword>
<keyword id="KW-0501">Molybdenum cofactor biosynthesis</keyword>
<keyword id="KW-1185">Reference proteome</keyword>
<sequence>MSELTHFDAKGNAWMVDITEKEETHRVAEVRGEVVMAPATLELIQQGGMAKGDVLGVARVAGIMAAKSTPNLIPMAHPIMITGVNIDFQILPPDRVEIRGLVKTGGKTGVEMEALTAVSVAALTIYDMCKAVDKGMMIQNIRLVSKSGGKSGDFMREGESQWEK</sequence>
<feature type="chain" id="PRO_1000213987" description="Cyclic pyranopterin monophosphate synthase">
    <location>
        <begin position="1"/>
        <end position="164"/>
    </location>
</feature>
<feature type="active site" evidence="1">
    <location>
        <position position="127"/>
    </location>
</feature>
<feature type="binding site" evidence="1">
    <location>
        <begin position="75"/>
        <end position="77"/>
    </location>
    <ligand>
        <name>substrate</name>
    </ligand>
</feature>
<feature type="binding site" evidence="1">
    <location>
        <begin position="112"/>
        <end position="113"/>
    </location>
    <ligand>
        <name>substrate</name>
    </ligand>
</feature>
<dbReference type="EC" id="4.6.1.17" evidence="1"/>
<dbReference type="EMBL" id="CP000612">
    <property type="protein sequence ID" value="ABO50777.1"/>
    <property type="molecule type" value="Genomic_DNA"/>
</dbReference>
<dbReference type="RefSeq" id="WP_011878575.1">
    <property type="nucleotide sequence ID" value="NC_009253.1"/>
</dbReference>
<dbReference type="SMR" id="A4J6S4"/>
<dbReference type="STRING" id="349161.Dred_2267"/>
<dbReference type="KEGG" id="drm:Dred_2267"/>
<dbReference type="eggNOG" id="COG0315">
    <property type="taxonomic scope" value="Bacteria"/>
</dbReference>
<dbReference type="HOGENOM" id="CLU_074693_1_0_9"/>
<dbReference type="OrthoDB" id="9794429at2"/>
<dbReference type="UniPathway" id="UPA00344"/>
<dbReference type="Proteomes" id="UP000001556">
    <property type="component" value="Chromosome"/>
</dbReference>
<dbReference type="GO" id="GO:0061799">
    <property type="term" value="F:cyclic pyranopterin monophosphate synthase activity"/>
    <property type="evidence" value="ECO:0007669"/>
    <property type="project" value="UniProtKB-UniRule"/>
</dbReference>
<dbReference type="GO" id="GO:0006777">
    <property type="term" value="P:Mo-molybdopterin cofactor biosynthetic process"/>
    <property type="evidence" value="ECO:0007669"/>
    <property type="project" value="UniProtKB-UniRule"/>
</dbReference>
<dbReference type="CDD" id="cd01420">
    <property type="entry name" value="MoaC_PE"/>
    <property type="match status" value="1"/>
</dbReference>
<dbReference type="Gene3D" id="3.30.70.640">
    <property type="entry name" value="Molybdopterin cofactor biosynthesis C (MoaC) domain"/>
    <property type="match status" value="1"/>
</dbReference>
<dbReference type="HAMAP" id="MF_01224_B">
    <property type="entry name" value="MoaC_B"/>
    <property type="match status" value="1"/>
</dbReference>
<dbReference type="InterPro" id="IPR023045">
    <property type="entry name" value="MoaC"/>
</dbReference>
<dbReference type="InterPro" id="IPR047594">
    <property type="entry name" value="MoaC_bact/euk"/>
</dbReference>
<dbReference type="InterPro" id="IPR036522">
    <property type="entry name" value="MoaC_sf"/>
</dbReference>
<dbReference type="InterPro" id="IPR050105">
    <property type="entry name" value="MoCo_biosynth_MoaA/MoaC"/>
</dbReference>
<dbReference type="InterPro" id="IPR002820">
    <property type="entry name" value="Mopterin_CF_biosynth-C_dom"/>
</dbReference>
<dbReference type="NCBIfam" id="TIGR00581">
    <property type="entry name" value="moaC"/>
    <property type="match status" value="1"/>
</dbReference>
<dbReference type="NCBIfam" id="NF006870">
    <property type="entry name" value="PRK09364.1"/>
    <property type="match status" value="1"/>
</dbReference>
<dbReference type="PANTHER" id="PTHR22960">
    <property type="entry name" value="MOLYBDOPTERIN COFACTOR SYNTHESIS PROTEIN A"/>
    <property type="match status" value="1"/>
</dbReference>
<dbReference type="Pfam" id="PF01967">
    <property type="entry name" value="MoaC"/>
    <property type="match status" value="1"/>
</dbReference>
<dbReference type="SUPFAM" id="SSF55040">
    <property type="entry name" value="Molybdenum cofactor biosynthesis protein C, MoaC"/>
    <property type="match status" value="1"/>
</dbReference>